<organism>
    <name type="scientific">Synechococcus elongatus (strain ATCC 33912 / PCC 7942 / FACHB-805)</name>
    <name type="common">Anacystis nidulans R2</name>
    <dbReference type="NCBI Taxonomy" id="1140"/>
    <lineage>
        <taxon>Bacteria</taxon>
        <taxon>Bacillati</taxon>
        <taxon>Cyanobacteriota</taxon>
        <taxon>Cyanophyceae</taxon>
        <taxon>Synechococcales</taxon>
        <taxon>Synechococcaceae</taxon>
        <taxon>Synechococcus</taxon>
    </lineage>
</organism>
<keyword id="KW-1185">Reference proteome</keyword>
<keyword id="KW-0687">Ribonucleoprotein</keyword>
<keyword id="KW-0689">Ribosomal protein</keyword>
<keyword id="KW-0694">RNA-binding</keyword>
<keyword id="KW-0699">rRNA-binding</keyword>
<gene>
    <name evidence="1" type="primary">rplN</name>
    <name evidence="1" type="synonym">rpl14</name>
    <name type="ordered locus">Synpcc7942_2222</name>
</gene>
<name>RL14_SYNE7</name>
<feature type="chain" id="PRO_0000266572" description="Large ribosomal subunit protein uL14">
    <location>
        <begin position="1"/>
        <end position="121"/>
    </location>
</feature>
<sequence>MIQQETYLNVADNSGARKLMCIRVLGSNRRYAGVGDVIIAVVKDALPNMPVKKSDVVRAVVVRTKKSLRRDSGNVIRFDDNAAVIINADGNPRGTRVFGPVARELRDRNFTKIVSLAPEVI</sequence>
<reference key="1">
    <citation type="submission" date="2005-08" db="EMBL/GenBank/DDBJ databases">
        <title>Complete sequence of chromosome 1 of Synechococcus elongatus PCC 7942.</title>
        <authorList>
            <consortium name="US DOE Joint Genome Institute"/>
            <person name="Copeland A."/>
            <person name="Lucas S."/>
            <person name="Lapidus A."/>
            <person name="Barry K."/>
            <person name="Detter J.C."/>
            <person name="Glavina T."/>
            <person name="Hammon N."/>
            <person name="Israni S."/>
            <person name="Pitluck S."/>
            <person name="Schmutz J."/>
            <person name="Larimer F."/>
            <person name="Land M."/>
            <person name="Kyrpides N."/>
            <person name="Lykidis A."/>
            <person name="Golden S."/>
            <person name="Richardson P."/>
        </authorList>
    </citation>
    <scope>NUCLEOTIDE SEQUENCE [LARGE SCALE GENOMIC DNA]</scope>
    <source>
        <strain>ATCC 33912 / PCC 7942 / FACHB-805</strain>
    </source>
</reference>
<proteinExistence type="inferred from homology"/>
<protein>
    <recommendedName>
        <fullName evidence="1">Large ribosomal subunit protein uL14</fullName>
    </recommendedName>
    <alternativeName>
        <fullName evidence="2">50S ribosomal protein L14</fullName>
    </alternativeName>
</protein>
<evidence type="ECO:0000255" key="1">
    <source>
        <dbReference type="HAMAP-Rule" id="MF_01367"/>
    </source>
</evidence>
<evidence type="ECO:0000305" key="2"/>
<accession>Q31L17</accession>
<dbReference type="EMBL" id="CP000100">
    <property type="protein sequence ID" value="ABB58252.1"/>
    <property type="molecule type" value="Genomic_DNA"/>
</dbReference>
<dbReference type="RefSeq" id="WP_011244185.1">
    <property type="nucleotide sequence ID" value="NZ_JACJTX010000001.1"/>
</dbReference>
<dbReference type="SMR" id="Q31L17"/>
<dbReference type="STRING" id="1140.Synpcc7942_2222"/>
<dbReference type="PaxDb" id="1140-Synpcc7942_2222"/>
<dbReference type="GeneID" id="72431105"/>
<dbReference type="KEGG" id="syf:Synpcc7942_2222"/>
<dbReference type="eggNOG" id="COG0093">
    <property type="taxonomic scope" value="Bacteria"/>
</dbReference>
<dbReference type="HOGENOM" id="CLU_095071_2_1_3"/>
<dbReference type="OrthoDB" id="9806379at2"/>
<dbReference type="BioCyc" id="SYNEL:SYNPCC7942_2222-MONOMER"/>
<dbReference type="Proteomes" id="UP000889800">
    <property type="component" value="Chromosome"/>
</dbReference>
<dbReference type="GO" id="GO:0022625">
    <property type="term" value="C:cytosolic large ribosomal subunit"/>
    <property type="evidence" value="ECO:0007669"/>
    <property type="project" value="TreeGrafter"/>
</dbReference>
<dbReference type="GO" id="GO:0070180">
    <property type="term" value="F:large ribosomal subunit rRNA binding"/>
    <property type="evidence" value="ECO:0007669"/>
    <property type="project" value="TreeGrafter"/>
</dbReference>
<dbReference type="GO" id="GO:0003735">
    <property type="term" value="F:structural constituent of ribosome"/>
    <property type="evidence" value="ECO:0007669"/>
    <property type="project" value="InterPro"/>
</dbReference>
<dbReference type="GO" id="GO:0006412">
    <property type="term" value="P:translation"/>
    <property type="evidence" value="ECO:0007669"/>
    <property type="project" value="UniProtKB-UniRule"/>
</dbReference>
<dbReference type="CDD" id="cd00337">
    <property type="entry name" value="Ribosomal_uL14"/>
    <property type="match status" value="1"/>
</dbReference>
<dbReference type="FunFam" id="2.40.150.20:FF:000001">
    <property type="entry name" value="50S ribosomal protein L14"/>
    <property type="match status" value="1"/>
</dbReference>
<dbReference type="Gene3D" id="2.40.150.20">
    <property type="entry name" value="Ribosomal protein L14"/>
    <property type="match status" value="1"/>
</dbReference>
<dbReference type="HAMAP" id="MF_01367">
    <property type="entry name" value="Ribosomal_uL14"/>
    <property type="match status" value="1"/>
</dbReference>
<dbReference type="InterPro" id="IPR000218">
    <property type="entry name" value="Ribosomal_uL14"/>
</dbReference>
<dbReference type="InterPro" id="IPR005745">
    <property type="entry name" value="Ribosomal_uL14_bac-type"/>
</dbReference>
<dbReference type="InterPro" id="IPR019972">
    <property type="entry name" value="Ribosomal_uL14_CS"/>
</dbReference>
<dbReference type="InterPro" id="IPR036853">
    <property type="entry name" value="Ribosomal_uL14_sf"/>
</dbReference>
<dbReference type="NCBIfam" id="TIGR01067">
    <property type="entry name" value="rplN_bact"/>
    <property type="match status" value="1"/>
</dbReference>
<dbReference type="PANTHER" id="PTHR11761">
    <property type="entry name" value="50S/60S RIBOSOMAL PROTEIN L14/L23"/>
    <property type="match status" value="1"/>
</dbReference>
<dbReference type="PANTHER" id="PTHR11761:SF3">
    <property type="entry name" value="LARGE RIBOSOMAL SUBUNIT PROTEIN UL14M"/>
    <property type="match status" value="1"/>
</dbReference>
<dbReference type="Pfam" id="PF00238">
    <property type="entry name" value="Ribosomal_L14"/>
    <property type="match status" value="1"/>
</dbReference>
<dbReference type="SMART" id="SM01374">
    <property type="entry name" value="Ribosomal_L14"/>
    <property type="match status" value="1"/>
</dbReference>
<dbReference type="SUPFAM" id="SSF50193">
    <property type="entry name" value="Ribosomal protein L14"/>
    <property type="match status" value="1"/>
</dbReference>
<dbReference type="PROSITE" id="PS00049">
    <property type="entry name" value="RIBOSOMAL_L14"/>
    <property type="match status" value="1"/>
</dbReference>
<comment type="function">
    <text evidence="1">Binds to 23S rRNA. Forms part of two intersubunit bridges in the 70S ribosome.</text>
</comment>
<comment type="subunit">
    <text evidence="1">Part of the 50S ribosomal subunit. Forms a cluster with proteins L3 and L19. In the 70S ribosome, L14 and L19 interact and together make contacts with the 16S rRNA in bridges B5 and B8.</text>
</comment>
<comment type="similarity">
    <text evidence="1">Belongs to the universal ribosomal protein uL14 family.</text>
</comment>